<gene>
    <name type="primary">ycf72-1</name>
</gene>
<gene>
    <name type="primary">ycf72-2</name>
</gene>
<protein>
    <recommendedName>
        <fullName>Uncharacterized protein ycf72</fullName>
    </recommendedName>
    <alternativeName>
        <fullName>ORF137</fullName>
    </alternativeName>
</protein>
<organism>
    <name type="scientific">Zea mays</name>
    <name type="common">Maize</name>
    <dbReference type="NCBI Taxonomy" id="4577"/>
    <lineage>
        <taxon>Eukaryota</taxon>
        <taxon>Viridiplantae</taxon>
        <taxon>Streptophyta</taxon>
        <taxon>Embryophyta</taxon>
        <taxon>Tracheophyta</taxon>
        <taxon>Spermatophyta</taxon>
        <taxon>Magnoliopsida</taxon>
        <taxon>Liliopsida</taxon>
        <taxon>Poales</taxon>
        <taxon>Poaceae</taxon>
        <taxon>PACMAD clade</taxon>
        <taxon>Panicoideae</taxon>
        <taxon>Andropogonodae</taxon>
        <taxon>Andropogoneae</taxon>
        <taxon>Tripsacinae</taxon>
        <taxon>Zea</taxon>
    </lineage>
</organism>
<feature type="chain" id="PRO_0000217403" description="Uncharacterized protein ycf72">
    <location>
        <begin position="1"/>
        <end position="137"/>
    </location>
</feature>
<comment type="subcellular location">
    <subcellularLocation>
        <location>Plastid</location>
        <location>Chloroplast</location>
    </subcellularLocation>
</comment>
<comment type="similarity">
    <text evidence="1">Belongs to the ycf72 family.</text>
</comment>
<sequence length="137" mass="14901">MGAFPSPPPWGWSTGFITTPLTTGRLPSQHLDPALPKLFWFTPTLPTCPTVAKQFWDTKRTSPDGNLKVANLPSFAISFATAPAALANCPPLPRVISMLCMAVPKGISVEVDSSFFSKNPFPNCTSFFQSIRLSRCI</sequence>
<reference key="1">
    <citation type="journal article" date="1995" name="J. Mol. Biol.">
        <title>Complete sequence of the maize chloroplast genome: gene content, hotspots of divergence and fine tuning of genetic information by transcript editing.</title>
        <authorList>
            <person name="Maier R.M."/>
            <person name="Neckermann K."/>
            <person name="Igloi G.L."/>
            <person name="Koessel H."/>
        </authorList>
    </citation>
    <scope>NUCLEOTIDE SEQUENCE [LARGE SCALE GENOMIC DNA]</scope>
    <source>
        <strain>cv. B73</strain>
    </source>
</reference>
<keyword id="KW-0150">Chloroplast</keyword>
<keyword id="KW-0934">Plastid</keyword>
<keyword id="KW-1185">Reference proteome</keyword>
<proteinExistence type="inferred from homology"/>
<evidence type="ECO:0000305" key="1"/>
<name>YCF72_MAIZE</name>
<geneLocation type="chloroplast"/>
<accession>Q37082</accession>
<dbReference type="EMBL" id="X86563">
    <property type="protein sequence ID" value="CAA60372.1"/>
    <property type="molecule type" value="Genomic_DNA"/>
</dbReference>
<dbReference type="EMBL" id="X86563">
    <property type="protein sequence ID" value="CAA60328.1"/>
    <property type="molecule type" value="Genomic_DNA"/>
</dbReference>
<dbReference type="PIR" id="S58640">
    <property type="entry name" value="S58640"/>
</dbReference>
<dbReference type="RefSeq" id="NP_043067.1">
    <property type="nucleotide sequence ID" value="NC_001666.2"/>
</dbReference>
<dbReference type="RefSeq" id="NP_043111.1">
    <property type="nucleotide sequence ID" value="NC_001666.2"/>
</dbReference>
<dbReference type="STRING" id="4577.Q37082"/>
<dbReference type="PaxDb" id="4577-GRMZM2G040858_P01"/>
<dbReference type="KEGG" id="zma:1466366"/>
<dbReference type="KEGG" id="zma:1466390"/>
<dbReference type="eggNOG" id="ENOG502S62T">
    <property type="taxonomic scope" value="Eukaryota"/>
</dbReference>
<dbReference type="HOGENOM" id="CLU_127319_0_0_1"/>
<dbReference type="InParanoid" id="Q37082"/>
<dbReference type="OMA" id="NCCVVNL"/>
<dbReference type="OrthoDB" id="597657at2759"/>
<dbReference type="Proteomes" id="UP000007305">
    <property type="component" value="Chloroplast"/>
</dbReference>
<dbReference type="GO" id="GO:0009507">
    <property type="term" value="C:chloroplast"/>
    <property type="evidence" value="ECO:0007669"/>
    <property type="project" value="UniProtKB-SubCell"/>
</dbReference>
<dbReference type="InterPro" id="IPR038860">
    <property type="entry name" value="YCF72"/>
</dbReference>
<dbReference type="PANTHER" id="PTHR37377">
    <property type="entry name" value="RIBULOSE BISPHOSPHATE CARBOXYLASE LARGE CHAIN"/>
    <property type="match status" value="1"/>
</dbReference>
<dbReference type="PANTHER" id="PTHR37377:SF2">
    <property type="entry name" value="SMALL RIBOSOMAL SUBUNIT PROTEIN US2C"/>
    <property type="match status" value="1"/>
</dbReference>